<proteinExistence type="inferred from homology"/>
<keyword id="KW-0067">ATP-binding</keyword>
<keyword id="KW-0547">Nucleotide-binding</keyword>
<keyword id="KW-0548">Nucleotidyltransferase</keyword>
<keyword id="KW-0808">Transferase</keyword>
<reference key="1">
    <citation type="submission" date="2009-03" db="EMBL/GenBank/DDBJ databases">
        <title>Brucella melitensis ATCC 23457 whole genome shotgun sequencing project.</title>
        <authorList>
            <person name="Setubal J.C."/>
            <person name="Boyle S."/>
            <person name="Crasta O.R."/>
            <person name="Gillespie J.J."/>
            <person name="Kenyon R.W."/>
            <person name="Lu J."/>
            <person name="Mane S."/>
            <person name="Nagrani S."/>
            <person name="Shallom J.M."/>
            <person name="Shallom S."/>
            <person name="Shukla M."/>
            <person name="Snyder E.E."/>
            <person name="Sobral B.W."/>
            <person name="Wattam A.R."/>
            <person name="Will R."/>
            <person name="Williams K."/>
            <person name="Yoo H."/>
            <person name="Munk C."/>
            <person name="Tapia R."/>
            <person name="Han C."/>
            <person name="Detter J.C."/>
            <person name="Bruce D."/>
            <person name="Brettin T.S."/>
        </authorList>
    </citation>
    <scope>NUCLEOTIDE SEQUENCE [LARGE SCALE GENOMIC DNA]</scope>
    <source>
        <strain>ATCC 23457</strain>
    </source>
</reference>
<accession>C0RGP5</accession>
<comment type="function">
    <text evidence="1">With CysN forms the ATP sulfurylase (ATPS) that catalyzes the adenylation of sulfate producing adenosine 5'-phosphosulfate (APS) and diphosphate, the first enzymatic step in sulfur assimilation pathway. APS synthesis involves the formation of a high-energy phosphoric-sulfuric acid anhydride bond driven by GTP hydrolysis by CysN coupled to ATP hydrolysis by CysD.</text>
</comment>
<comment type="catalytic activity">
    <reaction evidence="1">
        <text>sulfate + ATP + H(+) = adenosine 5'-phosphosulfate + diphosphate</text>
        <dbReference type="Rhea" id="RHEA:18133"/>
        <dbReference type="ChEBI" id="CHEBI:15378"/>
        <dbReference type="ChEBI" id="CHEBI:16189"/>
        <dbReference type="ChEBI" id="CHEBI:30616"/>
        <dbReference type="ChEBI" id="CHEBI:33019"/>
        <dbReference type="ChEBI" id="CHEBI:58243"/>
        <dbReference type="EC" id="2.7.7.4"/>
    </reaction>
</comment>
<comment type="pathway">
    <text evidence="1">Sulfur metabolism; hydrogen sulfide biosynthesis; sulfite from sulfate: step 1/3.</text>
</comment>
<comment type="subunit">
    <text evidence="1">Heterodimer composed of CysD, the smaller subunit, and CysN.</text>
</comment>
<comment type="similarity">
    <text evidence="1">Belongs to the PAPS reductase family. CysD subfamily.</text>
</comment>
<name>CYSD_BRUMB</name>
<evidence type="ECO:0000255" key="1">
    <source>
        <dbReference type="HAMAP-Rule" id="MF_00064"/>
    </source>
</evidence>
<evidence type="ECO:0000256" key="2">
    <source>
        <dbReference type="SAM" id="MobiDB-lite"/>
    </source>
</evidence>
<dbReference type="EC" id="2.7.7.4" evidence="1"/>
<dbReference type="EMBL" id="CP001488">
    <property type="protein sequence ID" value="ACO00003.1"/>
    <property type="molecule type" value="Genomic_DNA"/>
</dbReference>
<dbReference type="SMR" id="C0RGP5"/>
<dbReference type="KEGG" id="bmi:BMEA_A0201"/>
<dbReference type="HOGENOM" id="CLU_043026_0_0_5"/>
<dbReference type="UniPathway" id="UPA00140">
    <property type="reaction ID" value="UER00204"/>
</dbReference>
<dbReference type="Proteomes" id="UP000001748">
    <property type="component" value="Chromosome I"/>
</dbReference>
<dbReference type="GO" id="GO:0005524">
    <property type="term" value="F:ATP binding"/>
    <property type="evidence" value="ECO:0007669"/>
    <property type="project" value="UniProtKB-KW"/>
</dbReference>
<dbReference type="GO" id="GO:0004781">
    <property type="term" value="F:sulfate adenylyltransferase (ATP) activity"/>
    <property type="evidence" value="ECO:0007669"/>
    <property type="project" value="UniProtKB-UniRule"/>
</dbReference>
<dbReference type="GO" id="GO:0070814">
    <property type="term" value="P:hydrogen sulfide biosynthetic process"/>
    <property type="evidence" value="ECO:0007669"/>
    <property type="project" value="UniProtKB-UniRule"/>
</dbReference>
<dbReference type="GO" id="GO:0000103">
    <property type="term" value="P:sulfate assimilation"/>
    <property type="evidence" value="ECO:0007669"/>
    <property type="project" value="UniProtKB-UniRule"/>
</dbReference>
<dbReference type="CDD" id="cd23946">
    <property type="entry name" value="Sulfate_adenylyltransferase_2"/>
    <property type="match status" value="1"/>
</dbReference>
<dbReference type="FunFam" id="3.40.50.620:FF:000002">
    <property type="entry name" value="Sulfate adenylyltransferase subunit 2"/>
    <property type="match status" value="1"/>
</dbReference>
<dbReference type="Gene3D" id="3.40.50.620">
    <property type="entry name" value="HUPs"/>
    <property type="match status" value="1"/>
</dbReference>
<dbReference type="HAMAP" id="MF_00064">
    <property type="entry name" value="Sulf_adenylyltr_sub2"/>
    <property type="match status" value="1"/>
</dbReference>
<dbReference type="InterPro" id="IPR002500">
    <property type="entry name" value="PAPS_reduct_dom"/>
</dbReference>
<dbReference type="InterPro" id="IPR014729">
    <property type="entry name" value="Rossmann-like_a/b/a_fold"/>
</dbReference>
<dbReference type="InterPro" id="IPR011784">
    <property type="entry name" value="SO4_adenylTrfase_ssu"/>
</dbReference>
<dbReference type="InterPro" id="IPR050128">
    <property type="entry name" value="Sulfate_adenylyltrnsfr_sub2"/>
</dbReference>
<dbReference type="NCBIfam" id="TIGR02039">
    <property type="entry name" value="CysD"/>
    <property type="match status" value="1"/>
</dbReference>
<dbReference type="NCBIfam" id="NF003587">
    <property type="entry name" value="PRK05253.1"/>
    <property type="match status" value="1"/>
</dbReference>
<dbReference type="NCBIfam" id="NF009214">
    <property type="entry name" value="PRK12563.1"/>
    <property type="match status" value="1"/>
</dbReference>
<dbReference type="PANTHER" id="PTHR43196">
    <property type="entry name" value="SULFATE ADENYLYLTRANSFERASE SUBUNIT 2"/>
    <property type="match status" value="1"/>
</dbReference>
<dbReference type="PANTHER" id="PTHR43196:SF1">
    <property type="entry name" value="SULFATE ADENYLYLTRANSFERASE SUBUNIT 2"/>
    <property type="match status" value="1"/>
</dbReference>
<dbReference type="Pfam" id="PF01507">
    <property type="entry name" value="PAPS_reduct"/>
    <property type="match status" value="1"/>
</dbReference>
<dbReference type="PIRSF" id="PIRSF002936">
    <property type="entry name" value="CysDAde_trans"/>
    <property type="match status" value="1"/>
</dbReference>
<dbReference type="SUPFAM" id="SSF52402">
    <property type="entry name" value="Adenine nucleotide alpha hydrolases-like"/>
    <property type="match status" value="1"/>
</dbReference>
<protein>
    <recommendedName>
        <fullName evidence="1">Sulfate adenylyltransferase subunit 2</fullName>
        <ecNumber evidence="1">2.7.7.4</ecNumber>
    </recommendedName>
    <alternativeName>
        <fullName evidence="1">ATP-sulfurylase small subunit</fullName>
    </alternativeName>
    <alternativeName>
        <fullName evidence="1">Sulfate adenylate transferase</fullName>
        <shortName evidence="1">SAT</shortName>
    </alternativeName>
</protein>
<gene>
    <name evidence="1" type="primary">cysD</name>
    <name type="ordered locus">BMEA_A0201</name>
</gene>
<sequence length="300" mass="34742">MKNLTHLQRLEAEAIHVFREVAATFSNPVMLYSVSKDSSVMLHLAMKAFYPAPPPFPFLHVDTTWKFREMIEFRDAQAREKGFELLVHVNEQGVRDGIGPFTHGSNVHTHIMKTVGLRQALDKYRFDAAFGGARRDEEKSRAKERIFSFRNAQHGWDPKNQRPEMWKIYNTRVSKGESIRVFPLSNWTELDIWQYILQENIPIVPLYFAARRPVVERDGMLIMVDDDRMKLRPGEPVENRLVRFRTLGCYPLTGAIPSSAANLSDIVEEMLIARTSERQGRAIDRDEAGSMEKKKREGYF</sequence>
<organism>
    <name type="scientific">Brucella melitensis biotype 2 (strain ATCC 23457)</name>
    <dbReference type="NCBI Taxonomy" id="546272"/>
    <lineage>
        <taxon>Bacteria</taxon>
        <taxon>Pseudomonadati</taxon>
        <taxon>Pseudomonadota</taxon>
        <taxon>Alphaproteobacteria</taxon>
        <taxon>Hyphomicrobiales</taxon>
        <taxon>Brucellaceae</taxon>
        <taxon>Brucella/Ochrobactrum group</taxon>
        <taxon>Brucella</taxon>
    </lineage>
</organism>
<feature type="chain" id="PRO_1000117936" description="Sulfate adenylyltransferase subunit 2">
    <location>
        <begin position="1"/>
        <end position="300"/>
    </location>
</feature>
<feature type="region of interest" description="Disordered" evidence="2">
    <location>
        <begin position="281"/>
        <end position="300"/>
    </location>
</feature>